<accession>Q6ECI4</accession>
<accession>A8MTW0</accession>
<accession>B9EGU1</accession>
<accession>Q6ZPA1</accession>
<accession>Q9Y2N9</accession>
<sequence>MKSQEEVEVAGIKLCKAMSLGSVTFTDVAIDFSQDEWEWLNLAQRSLYKKVMLENYRNLVSVGLCISKPDVISLLEQEKDPWVIKGGMNRGLCPDLECVWVTKSLSLNQDIYEEKLPPAIIMERLKSYDLECSTLGKNWKCEDLFERELVNQKTHFRQETITHIDTLIEKRDHSNKSGTVFHLNTLSYIKQIFPMEERIFNFHTDKKSLKTHSVVKKHKQDRGEKKLLKCNDCEKIFSKISTLTLHQRIHTGEKPYECIECGKAFSQSAHLAQHQRIHTGEKPFECTECGKAFSQNAHLVQHQRVHTGEKPYQCKQCNKAFSQLAHLAQHQRVHTGEKPYECIECGKAFSDCSSLAHHRRIHTGKRPYECIDCGKAFRQNASLIRHRRYYHTGEKPFDCIDCGKAFTDHIGLIQHKRTHTGERPYKCNVCGKAFSHGSSLTVHQRIHTGEKPYECNICEKAFSHRGSLTLHQRVHTGEKPYECKECGKAFRQSTHLAHHQRIHTGEKPYECKECSKTFSQNAHLAQHQKIHTGEKPYECKECGKAFSQIAHLVQHQRVHTGEKPYECIECGKAFSDGSYLVQHQRLHSGKRPYECLECGKAFRQRASLICHQRCHTGEKPYECNVCGKAFSHRKSLTLHQRIHTGEKPYECKECSKAFSQVAHLTLHKRIHTGERPYECKECGKAFRQSVHLAHHQRIHTGESSVILSSALPYHQVL</sequence>
<dbReference type="EMBL" id="AY484591">
    <property type="protein sequence ID" value="AAS64219.1"/>
    <property type="molecule type" value="mRNA"/>
</dbReference>
<dbReference type="EMBL" id="AC007228">
    <property type="protein sequence ID" value="AAD23607.1"/>
    <property type="molecule type" value="Genomic_DNA"/>
</dbReference>
<dbReference type="EMBL" id="BC136762">
    <property type="protein sequence ID" value="AAI36763.1"/>
    <property type="molecule type" value="mRNA"/>
</dbReference>
<dbReference type="EMBL" id="AK129686">
    <property type="protein sequence ID" value="BAC85218.1"/>
    <property type="status" value="ALT_INIT"/>
    <property type="molecule type" value="mRNA"/>
</dbReference>
<dbReference type="CCDS" id="CCDS33122.1">
    <molecule id="Q6ECI4-1"/>
</dbReference>
<dbReference type="RefSeq" id="NP_001001668.3">
    <molecule id="Q6ECI4-1"/>
    <property type="nucleotide sequence ID" value="NM_001001668.4"/>
</dbReference>
<dbReference type="RefSeq" id="XP_047294760.1">
    <molecule id="Q6ECI4-1"/>
    <property type="nucleotide sequence ID" value="XM_047438804.1"/>
</dbReference>
<dbReference type="SMR" id="Q6ECI4"/>
<dbReference type="BioGRID" id="132748">
    <property type="interactions" value="3"/>
</dbReference>
<dbReference type="FunCoup" id="Q6ECI4">
    <property type="interactions" value="676"/>
</dbReference>
<dbReference type="STRING" id="9606.ENSP00000333223"/>
<dbReference type="GlyGen" id="Q6ECI4">
    <property type="glycosylation" value="1 site, 1 N-linked glycan (1 site)"/>
</dbReference>
<dbReference type="iPTMnet" id="Q6ECI4"/>
<dbReference type="PhosphoSitePlus" id="Q6ECI4"/>
<dbReference type="BioMuta" id="ZNF470"/>
<dbReference type="DMDM" id="313104257"/>
<dbReference type="jPOST" id="Q6ECI4"/>
<dbReference type="MassIVE" id="Q6ECI4"/>
<dbReference type="PaxDb" id="9606-ENSP00000333223"/>
<dbReference type="PeptideAtlas" id="Q6ECI4"/>
<dbReference type="ProteomicsDB" id="66276">
    <molecule id="Q6ECI4-1"/>
</dbReference>
<dbReference type="ProteomicsDB" id="66277">
    <molecule id="Q6ECI4-2"/>
</dbReference>
<dbReference type="Antibodypedia" id="33221">
    <property type="antibodies" value="13 antibodies from 10 providers"/>
</dbReference>
<dbReference type="DNASU" id="388566"/>
<dbReference type="Ensembl" id="ENST00000330619.13">
    <molecule id="Q6ECI4-1"/>
    <property type="protein sequence ID" value="ENSP00000333223.7"/>
    <property type="gene ID" value="ENSG00000197016.12"/>
</dbReference>
<dbReference type="Ensembl" id="ENST00000391709.4">
    <molecule id="Q6ECI4-1"/>
    <property type="protein sequence ID" value="ENSP00000375590.3"/>
    <property type="gene ID" value="ENSG00000197016.12"/>
</dbReference>
<dbReference type="GeneID" id="388566"/>
<dbReference type="KEGG" id="hsa:388566"/>
<dbReference type="MANE-Select" id="ENST00000330619.13">
    <property type="protein sequence ID" value="ENSP00000333223.7"/>
    <property type="RefSeq nucleotide sequence ID" value="NM_001001668.4"/>
    <property type="RefSeq protein sequence ID" value="NP_001001668.3"/>
</dbReference>
<dbReference type="UCSC" id="uc002qnl.5">
    <molecule id="Q6ECI4-1"/>
    <property type="organism name" value="human"/>
</dbReference>
<dbReference type="AGR" id="HGNC:22220"/>
<dbReference type="CTD" id="388566"/>
<dbReference type="DisGeNET" id="388566"/>
<dbReference type="GeneCards" id="ZNF470"/>
<dbReference type="HGNC" id="HGNC:22220">
    <property type="gene designation" value="ZNF470"/>
</dbReference>
<dbReference type="HPA" id="ENSG00000197016">
    <property type="expression patterns" value="Tissue enhanced (retina)"/>
</dbReference>
<dbReference type="MIM" id="620441">
    <property type="type" value="gene"/>
</dbReference>
<dbReference type="neXtProt" id="NX_Q6ECI4"/>
<dbReference type="OpenTargets" id="ENSG00000197016"/>
<dbReference type="PharmGKB" id="PA145007252"/>
<dbReference type="VEuPathDB" id="HostDB:ENSG00000197016"/>
<dbReference type="eggNOG" id="KOG1721">
    <property type="taxonomic scope" value="Eukaryota"/>
</dbReference>
<dbReference type="GeneTree" id="ENSGT00940000163087"/>
<dbReference type="HOGENOM" id="CLU_002678_44_5_1"/>
<dbReference type="InParanoid" id="Q6ECI4"/>
<dbReference type="OMA" id="CNDCEKM"/>
<dbReference type="OrthoDB" id="9411774at2759"/>
<dbReference type="PAN-GO" id="Q6ECI4">
    <property type="GO annotations" value="4 GO annotations based on evolutionary models"/>
</dbReference>
<dbReference type="PhylomeDB" id="Q6ECI4"/>
<dbReference type="TreeFam" id="TF341817"/>
<dbReference type="PathwayCommons" id="Q6ECI4"/>
<dbReference type="Reactome" id="R-HSA-212436">
    <property type="pathway name" value="Generic Transcription Pathway"/>
</dbReference>
<dbReference type="BioGRID-ORCS" id="388566">
    <property type="hits" value="6 hits in 1170 CRISPR screens"/>
</dbReference>
<dbReference type="GenomeRNAi" id="388566"/>
<dbReference type="Pharos" id="Q6ECI4">
    <property type="development level" value="Tdark"/>
</dbReference>
<dbReference type="PRO" id="PR:Q6ECI4"/>
<dbReference type="Proteomes" id="UP000005640">
    <property type="component" value="Chromosome 19"/>
</dbReference>
<dbReference type="RNAct" id="Q6ECI4">
    <property type="molecule type" value="protein"/>
</dbReference>
<dbReference type="Bgee" id="ENSG00000197016">
    <property type="expression patterns" value="Expressed in male germ line stem cell (sensu Vertebrata) in testis and 108 other cell types or tissues"/>
</dbReference>
<dbReference type="ExpressionAtlas" id="Q6ECI4">
    <property type="expression patterns" value="baseline and differential"/>
</dbReference>
<dbReference type="GO" id="GO:0016604">
    <property type="term" value="C:nuclear body"/>
    <property type="evidence" value="ECO:0000314"/>
    <property type="project" value="HPA"/>
</dbReference>
<dbReference type="GO" id="GO:0005654">
    <property type="term" value="C:nucleoplasm"/>
    <property type="evidence" value="ECO:0000314"/>
    <property type="project" value="HPA"/>
</dbReference>
<dbReference type="GO" id="GO:0005634">
    <property type="term" value="C:nucleus"/>
    <property type="evidence" value="ECO:0000318"/>
    <property type="project" value="GO_Central"/>
</dbReference>
<dbReference type="GO" id="GO:0000981">
    <property type="term" value="F:DNA-binding transcription factor activity, RNA polymerase II-specific"/>
    <property type="evidence" value="ECO:0000318"/>
    <property type="project" value="GO_Central"/>
</dbReference>
<dbReference type="GO" id="GO:0000978">
    <property type="term" value="F:RNA polymerase II cis-regulatory region sequence-specific DNA binding"/>
    <property type="evidence" value="ECO:0000318"/>
    <property type="project" value="GO_Central"/>
</dbReference>
<dbReference type="GO" id="GO:0008270">
    <property type="term" value="F:zinc ion binding"/>
    <property type="evidence" value="ECO:0007669"/>
    <property type="project" value="UniProtKB-KW"/>
</dbReference>
<dbReference type="GO" id="GO:0006357">
    <property type="term" value="P:regulation of transcription by RNA polymerase II"/>
    <property type="evidence" value="ECO:0000318"/>
    <property type="project" value="GO_Central"/>
</dbReference>
<dbReference type="CDD" id="cd07765">
    <property type="entry name" value="KRAB_A-box"/>
    <property type="match status" value="1"/>
</dbReference>
<dbReference type="FunFam" id="3.30.160.60:FF:002547">
    <property type="match status" value="1"/>
</dbReference>
<dbReference type="FunFam" id="3.30.160.60:FF:001502">
    <property type="entry name" value="ZFP28 zinc finger protein"/>
    <property type="match status" value="1"/>
</dbReference>
<dbReference type="FunFam" id="3.30.160.60:FF:000688">
    <property type="entry name" value="zinc finger protein 197 isoform X1"/>
    <property type="match status" value="1"/>
</dbReference>
<dbReference type="FunFam" id="3.30.160.60:FF:000016">
    <property type="entry name" value="zinc finger protein 37 homolog"/>
    <property type="match status" value="1"/>
</dbReference>
<dbReference type="FunFam" id="3.30.160.60:FF:001498">
    <property type="entry name" value="Zinc finger protein 404"/>
    <property type="match status" value="2"/>
</dbReference>
<dbReference type="FunFam" id="3.30.160.60:FF:000519">
    <property type="entry name" value="Zinc finger protein 470"/>
    <property type="match status" value="1"/>
</dbReference>
<dbReference type="FunFam" id="3.30.160.60:FF:000238">
    <property type="entry name" value="Zinc finger protein 485"/>
    <property type="match status" value="1"/>
</dbReference>
<dbReference type="FunFam" id="3.30.160.60:FF:001462">
    <property type="entry name" value="Zinc finger protein 502, isoform CRA_a"/>
    <property type="match status" value="1"/>
</dbReference>
<dbReference type="FunFam" id="3.30.160.60:FF:002254">
    <property type="entry name" value="Zinc finger protein 540"/>
    <property type="match status" value="1"/>
</dbReference>
<dbReference type="FunFam" id="3.30.160.60:FF:000878">
    <property type="entry name" value="Zinc finger protein 544"/>
    <property type="match status" value="1"/>
</dbReference>
<dbReference type="FunFam" id="3.30.160.60:FF:000281">
    <property type="entry name" value="Zinc finger protein 558 isoform X1"/>
    <property type="match status" value="1"/>
</dbReference>
<dbReference type="FunFam" id="3.30.160.60:FF:000737">
    <property type="entry name" value="Zinc finger protein 565"/>
    <property type="match status" value="5"/>
</dbReference>
<dbReference type="Gene3D" id="6.10.140.140">
    <property type="match status" value="1"/>
</dbReference>
<dbReference type="Gene3D" id="3.30.160.60">
    <property type="entry name" value="Classic Zinc Finger"/>
    <property type="match status" value="17"/>
</dbReference>
<dbReference type="InterPro" id="IPR001909">
    <property type="entry name" value="KRAB"/>
</dbReference>
<dbReference type="InterPro" id="IPR036051">
    <property type="entry name" value="KRAB_dom_sf"/>
</dbReference>
<dbReference type="InterPro" id="IPR050758">
    <property type="entry name" value="Znf_C2H2-type"/>
</dbReference>
<dbReference type="InterPro" id="IPR036236">
    <property type="entry name" value="Znf_C2H2_sf"/>
</dbReference>
<dbReference type="InterPro" id="IPR013087">
    <property type="entry name" value="Znf_C2H2_type"/>
</dbReference>
<dbReference type="PANTHER" id="PTHR23234:SF8">
    <property type="entry name" value="C2H2-TYPE DOMAIN-CONTAINING PROTEIN"/>
    <property type="match status" value="1"/>
</dbReference>
<dbReference type="PANTHER" id="PTHR23234">
    <property type="entry name" value="ZNF44 PROTEIN"/>
    <property type="match status" value="1"/>
</dbReference>
<dbReference type="Pfam" id="PF01352">
    <property type="entry name" value="KRAB"/>
    <property type="match status" value="1"/>
</dbReference>
<dbReference type="Pfam" id="PF00096">
    <property type="entry name" value="zf-C2H2"/>
    <property type="match status" value="16"/>
</dbReference>
<dbReference type="SMART" id="SM00349">
    <property type="entry name" value="KRAB"/>
    <property type="match status" value="1"/>
</dbReference>
<dbReference type="SMART" id="SM00355">
    <property type="entry name" value="ZnF_C2H2"/>
    <property type="match status" value="17"/>
</dbReference>
<dbReference type="SUPFAM" id="SSF57667">
    <property type="entry name" value="beta-beta-alpha zinc fingers"/>
    <property type="match status" value="10"/>
</dbReference>
<dbReference type="SUPFAM" id="SSF109640">
    <property type="entry name" value="KRAB domain (Kruppel-associated box)"/>
    <property type="match status" value="1"/>
</dbReference>
<dbReference type="PROSITE" id="PS50805">
    <property type="entry name" value="KRAB"/>
    <property type="match status" value="1"/>
</dbReference>
<dbReference type="PROSITE" id="PS00028">
    <property type="entry name" value="ZINC_FINGER_C2H2_1"/>
    <property type="match status" value="17"/>
</dbReference>
<dbReference type="PROSITE" id="PS50157">
    <property type="entry name" value="ZINC_FINGER_C2H2_2"/>
    <property type="match status" value="17"/>
</dbReference>
<organism>
    <name type="scientific">Homo sapiens</name>
    <name type="common">Human</name>
    <dbReference type="NCBI Taxonomy" id="9606"/>
    <lineage>
        <taxon>Eukaryota</taxon>
        <taxon>Metazoa</taxon>
        <taxon>Chordata</taxon>
        <taxon>Craniata</taxon>
        <taxon>Vertebrata</taxon>
        <taxon>Euteleostomi</taxon>
        <taxon>Mammalia</taxon>
        <taxon>Eutheria</taxon>
        <taxon>Euarchontoglires</taxon>
        <taxon>Primates</taxon>
        <taxon>Haplorrhini</taxon>
        <taxon>Catarrhini</taxon>
        <taxon>Hominidae</taxon>
        <taxon>Homo</taxon>
    </lineage>
</organism>
<evidence type="ECO:0000255" key="1"/>
<evidence type="ECO:0000255" key="2">
    <source>
        <dbReference type="PROSITE-ProRule" id="PRU00042"/>
    </source>
</evidence>
<evidence type="ECO:0000255" key="3">
    <source>
        <dbReference type="PROSITE-ProRule" id="PRU00119"/>
    </source>
</evidence>
<evidence type="ECO:0000269" key="4">
    <source>
    </source>
</evidence>
<evidence type="ECO:0000269" key="5">
    <source>
    </source>
</evidence>
<evidence type="ECO:0000305" key="6"/>
<keyword id="KW-0025">Alternative splicing</keyword>
<keyword id="KW-0238">DNA-binding</keyword>
<keyword id="KW-0479">Metal-binding</keyword>
<keyword id="KW-0539">Nucleus</keyword>
<keyword id="KW-1267">Proteomics identification</keyword>
<keyword id="KW-1185">Reference proteome</keyword>
<keyword id="KW-0677">Repeat</keyword>
<keyword id="KW-0804">Transcription</keyword>
<keyword id="KW-0805">Transcription regulation</keyword>
<keyword id="KW-0862">Zinc</keyword>
<keyword id="KW-0863">Zinc-finger</keyword>
<gene>
    <name type="primary">ZNF470</name>
    <name type="synonym">CZF1</name>
</gene>
<proteinExistence type="evidence at protein level"/>
<protein>
    <recommendedName>
        <fullName>Zinc finger protein 470</fullName>
    </recommendedName>
    <alternativeName>
        <fullName>Chondrogenesis zinc finger protein 1</fullName>
        <shortName>CZF-1</shortName>
    </alternativeName>
</protein>
<comment type="function">
    <text>May be involved in transcriptional regulation.</text>
</comment>
<comment type="subcellular location">
    <subcellularLocation>
        <location evidence="5">Nucleus</location>
    </subcellularLocation>
</comment>
<comment type="alternative products">
    <event type="alternative splicing"/>
    <isoform>
        <id>Q6ECI4-1</id>
        <name>1</name>
        <sequence type="displayed"/>
    </isoform>
    <isoform>
        <id>Q6ECI4-2</id>
        <name>2</name>
        <sequence type="described" ref="VSP_023660 VSP_023661"/>
    </isoform>
</comment>
<comment type="tissue specificity">
    <text evidence="5">Highly expressed in testis. Very low expression in thymus. No expression in other tissues tested. Expressed in a differentiation stage-specific manner in mesenchymal chondrogenic progenitor cells.</text>
</comment>
<comment type="similarity">
    <text evidence="6">Belongs to the krueppel C2H2-type zinc-finger protein family.</text>
</comment>
<comment type="sequence caution" evidence="6">
    <conflict type="erroneous initiation">
        <sequence resource="EMBL-CDS" id="BAC85218"/>
    </conflict>
    <text>Truncated N-terminus.</text>
</comment>
<feature type="chain" id="PRO_0000280413" description="Zinc finger protein 470">
    <location>
        <begin position="1"/>
        <end position="717"/>
    </location>
</feature>
<feature type="domain" description="KRAB" evidence="3">
    <location>
        <begin position="23"/>
        <end position="94"/>
    </location>
</feature>
<feature type="zinc finger region" description="C2H2-type 1" evidence="2">
    <location>
        <begin position="228"/>
        <end position="250"/>
    </location>
</feature>
<feature type="zinc finger region" description="C2H2-type 2" evidence="2">
    <location>
        <begin position="256"/>
        <end position="278"/>
    </location>
</feature>
<feature type="zinc finger region" description="C2H2-type 3" evidence="2">
    <location>
        <begin position="284"/>
        <end position="306"/>
    </location>
</feature>
<feature type="zinc finger region" description="C2H2-type 4" evidence="2">
    <location>
        <begin position="312"/>
        <end position="334"/>
    </location>
</feature>
<feature type="zinc finger region" description="C2H2-type 5" evidence="2">
    <location>
        <begin position="340"/>
        <end position="362"/>
    </location>
</feature>
<feature type="zinc finger region" description="C2H2-type 6" evidence="2">
    <location>
        <begin position="368"/>
        <end position="391"/>
    </location>
</feature>
<feature type="zinc finger region" description="C2H2-type 7" evidence="2">
    <location>
        <begin position="397"/>
        <end position="419"/>
    </location>
</feature>
<feature type="zinc finger region" description="C2H2-type 8" evidence="2">
    <location>
        <begin position="425"/>
        <end position="447"/>
    </location>
</feature>
<feature type="zinc finger region" description="C2H2-type 9" evidence="2">
    <location>
        <begin position="453"/>
        <end position="475"/>
    </location>
</feature>
<feature type="zinc finger region" description="C2H2-type 10" evidence="2">
    <location>
        <begin position="481"/>
        <end position="503"/>
    </location>
</feature>
<feature type="zinc finger region" description="C2H2-type 11" evidence="2">
    <location>
        <begin position="509"/>
        <end position="531"/>
    </location>
</feature>
<feature type="zinc finger region" description="C2H2-type 12" evidence="2">
    <location>
        <begin position="537"/>
        <end position="559"/>
    </location>
</feature>
<feature type="zinc finger region" description="C2H2-type 13" evidence="2">
    <location>
        <begin position="565"/>
        <end position="587"/>
    </location>
</feature>
<feature type="zinc finger region" description="C2H2-type 14" evidence="2">
    <location>
        <begin position="593"/>
        <end position="615"/>
    </location>
</feature>
<feature type="zinc finger region" description="C2H2-type 15" evidence="2">
    <location>
        <begin position="621"/>
        <end position="643"/>
    </location>
</feature>
<feature type="zinc finger region" description="C2H2-type 16" evidence="2">
    <location>
        <begin position="649"/>
        <end position="671"/>
    </location>
</feature>
<feature type="zinc finger region" description="C2H2-type 17" evidence="2">
    <location>
        <begin position="677"/>
        <end position="699"/>
    </location>
</feature>
<feature type="short sequence motif" description="Nuclear localization signal" evidence="1">
    <location>
        <begin position="216"/>
        <end position="219"/>
    </location>
</feature>
<feature type="short sequence motif" description="Nuclear localization signal" evidence="1">
    <location>
        <begin position="385"/>
        <end position="388"/>
    </location>
</feature>
<feature type="splice variant" id="VSP_023660" description="In isoform 2." evidence="6">
    <original>G</original>
    <variation>GKSIFLLLPPHDSVVFYAIIRISHSFPQHRQFLYVFLHAG</variation>
    <location>
        <position position="63"/>
    </location>
</feature>
<feature type="splice variant" id="VSP_023661" description="In isoform 2." evidence="6">
    <location>
        <begin position="95"/>
        <end position="251"/>
    </location>
</feature>
<feature type="sequence variant" id="VAR_031143" description="In dbSNP:rs10421285." evidence="5">
    <original>V</original>
    <variation>L</variation>
    <location>
        <position position="23"/>
    </location>
</feature>
<feature type="sequence variant" id="VAR_031144" description="In dbSNP:rs3752179.">
    <original>K</original>
    <variation>R</variation>
    <location>
        <position position="254"/>
    </location>
</feature>
<feature type="sequence variant" id="VAR_031145" description="In dbSNP:rs4801177." evidence="4 5">
    <original>T</original>
    <variation>I</variation>
    <location>
        <position position="418"/>
    </location>
</feature>
<feature type="sequence variant" id="VAR_061950" description="In dbSNP:rs35077804.">
    <original>I</original>
    <variation>T</variation>
    <location>
        <position position="642"/>
    </location>
</feature>
<feature type="sequence conflict" description="In Ref. 1; AAS64219." evidence="6" ref="1">
    <original>C</original>
    <variation>R</variation>
    <location>
        <position position="542"/>
    </location>
</feature>
<feature type="sequence conflict" description="In Ref. 1; AAS64219." evidence="6" ref="1">
    <original>Q</original>
    <variation>P</variation>
    <location>
        <position position="584"/>
    </location>
</feature>
<reference key="1">
    <citation type="journal article" date="2004" name="Exp. Cell Res.">
        <title>Characterization and chondrocyte differentiation stage-specific expression of KRAB zinc-finger protein gene ZNF470.</title>
        <authorList>
            <person name="Hering T.M."/>
            <person name="Kazmi N.H."/>
            <person name="Huynh T.D."/>
            <person name="Kollar J."/>
            <person name="Xu L."/>
            <person name="Hunyady A.B."/>
            <person name="Johnstone B."/>
        </authorList>
    </citation>
    <scope>NUCLEOTIDE SEQUENCE [MRNA] (ISOFORM 1)</scope>
    <scope>SUBCELLULAR LOCATION</scope>
    <scope>TISSUE SPECIFICITY</scope>
    <scope>VARIANTS LEU-23 AND ILE-418</scope>
    <source>
        <tissue>Mesenchymal stem cell</tissue>
    </source>
</reference>
<reference key="2">
    <citation type="journal article" date="2004" name="Nature">
        <title>The DNA sequence and biology of human chromosome 19.</title>
        <authorList>
            <person name="Grimwood J."/>
            <person name="Gordon L.A."/>
            <person name="Olsen A.S."/>
            <person name="Terry A."/>
            <person name="Schmutz J."/>
            <person name="Lamerdin J.E."/>
            <person name="Hellsten U."/>
            <person name="Goodstein D."/>
            <person name="Couronne O."/>
            <person name="Tran-Gyamfi M."/>
            <person name="Aerts A."/>
            <person name="Altherr M."/>
            <person name="Ashworth L."/>
            <person name="Bajorek E."/>
            <person name="Black S."/>
            <person name="Branscomb E."/>
            <person name="Caenepeel S."/>
            <person name="Carrano A.V."/>
            <person name="Caoile C."/>
            <person name="Chan Y.M."/>
            <person name="Christensen M."/>
            <person name="Cleland C.A."/>
            <person name="Copeland A."/>
            <person name="Dalin E."/>
            <person name="Dehal P."/>
            <person name="Denys M."/>
            <person name="Detter J.C."/>
            <person name="Escobar J."/>
            <person name="Flowers D."/>
            <person name="Fotopulos D."/>
            <person name="Garcia C."/>
            <person name="Georgescu A.M."/>
            <person name="Glavina T."/>
            <person name="Gomez M."/>
            <person name="Gonzales E."/>
            <person name="Groza M."/>
            <person name="Hammon N."/>
            <person name="Hawkins T."/>
            <person name="Haydu L."/>
            <person name="Ho I."/>
            <person name="Huang W."/>
            <person name="Israni S."/>
            <person name="Jett J."/>
            <person name="Kadner K."/>
            <person name="Kimball H."/>
            <person name="Kobayashi A."/>
            <person name="Larionov V."/>
            <person name="Leem S.-H."/>
            <person name="Lopez F."/>
            <person name="Lou Y."/>
            <person name="Lowry S."/>
            <person name="Malfatti S."/>
            <person name="Martinez D."/>
            <person name="McCready P.M."/>
            <person name="Medina C."/>
            <person name="Morgan J."/>
            <person name="Nelson K."/>
            <person name="Nolan M."/>
            <person name="Ovcharenko I."/>
            <person name="Pitluck S."/>
            <person name="Pollard M."/>
            <person name="Popkie A.P."/>
            <person name="Predki P."/>
            <person name="Quan G."/>
            <person name="Ramirez L."/>
            <person name="Rash S."/>
            <person name="Retterer J."/>
            <person name="Rodriguez A."/>
            <person name="Rogers S."/>
            <person name="Salamov A."/>
            <person name="Salazar A."/>
            <person name="She X."/>
            <person name="Smith D."/>
            <person name="Slezak T."/>
            <person name="Solovyev V."/>
            <person name="Thayer N."/>
            <person name="Tice H."/>
            <person name="Tsai M."/>
            <person name="Ustaszewska A."/>
            <person name="Vo N."/>
            <person name="Wagner M."/>
            <person name="Wheeler J."/>
            <person name="Wu K."/>
            <person name="Xie G."/>
            <person name="Yang J."/>
            <person name="Dubchak I."/>
            <person name="Furey T.S."/>
            <person name="DeJong P."/>
            <person name="Dickson M."/>
            <person name="Gordon D."/>
            <person name="Eichler E.E."/>
            <person name="Pennacchio L.A."/>
            <person name="Richardson P."/>
            <person name="Stubbs L."/>
            <person name="Rokhsar D.S."/>
            <person name="Myers R.M."/>
            <person name="Rubin E.M."/>
            <person name="Lucas S.M."/>
        </authorList>
    </citation>
    <scope>NUCLEOTIDE SEQUENCE [LARGE SCALE GENOMIC DNA]</scope>
</reference>
<reference key="3">
    <citation type="journal article" date="2004" name="Genome Res.">
        <title>The status, quality, and expansion of the NIH full-length cDNA project: the Mammalian Gene Collection (MGC).</title>
        <authorList>
            <consortium name="The MGC Project Team"/>
        </authorList>
    </citation>
    <scope>NUCLEOTIDE SEQUENCE [LARGE SCALE MRNA] (ISOFORM 1)</scope>
    <source>
        <tissue>Brain</tissue>
    </source>
</reference>
<reference key="4">
    <citation type="journal article" date="2004" name="Nat. Genet.">
        <title>Complete sequencing and characterization of 21,243 full-length human cDNAs.</title>
        <authorList>
            <person name="Ota T."/>
            <person name="Suzuki Y."/>
            <person name="Nishikawa T."/>
            <person name="Otsuki T."/>
            <person name="Sugiyama T."/>
            <person name="Irie R."/>
            <person name="Wakamatsu A."/>
            <person name="Hayashi K."/>
            <person name="Sato H."/>
            <person name="Nagai K."/>
            <person name="Kimura K."/>
            <person name="Makita H."/>
            <person name="Sekine M."/>
            <person name="Obayashi M."/>
            <person name="Nishi T."/>
            <person name="Shibahara T."/>
            <person name="Tanaka T."/>
            <person name="Ishii S."/>
            <person name="Yamamoto J."/>
            <person name="Saito K."/>
            <person name="Kawai Y."/>
            <person name="Isono Y."/>
            <person name="Nakamura Y."/>
            <person name="Nagahari K."/>
            <person name="Murakami K."/>
            <person name="Yasuda T."/>
            <person name="Iwayanagi T."/>
            <person name="Wagatsuma M."/>
            <person name="Shiratori A."/>
            <person name="Sudo H."/>
            <person name="Hosoiri T."/>
            <person name="Kaku Y."/>
            <person name="Kodaira H."/>
            <person name="Kondo H."/>
            <person name="Sugawara M."/>
            <person name="Takahashi M."/>
            <person name="Kanda K."/>
            <person name="Yokoi T."/>
            <person name="Furuya T."/>
            <person name="Kikkawa E."/>
            <person name="Omura Y."/>
            <person name="Abe K."/>
            <person name="Kamihara K."/>
            <person name="Katsuta N."/>
            <person name="Sato K."/>
            <person name="Tanikawa M."/>
            <person name="Yamazaki M."/>
            <person name="Ninomiya K."/>
            <person name="Ishibashi T."/>
            <person name="Yamashita H."/>
            <person name="Murakawa K."/>
            <person name="Fujimori K."/>
            <person name="Tanai H."/>
            <person name="Kimata M."/>
            <person name="Watanabe M."/>
            <person name="Hiraoka S."/>
            <person name="Chiba Y."/>
            <person name="Ishida S."/>
            <person name="Ono Y."/>
            <person name="Takiguchi S."/>
            <person name="Watanabe S."/>
            <person name="Yosida M."/>
            <person name="Hotuta T."/>
            <person name="Kusano J."/>
            <person name="Kanehori K."/>
            <person name="Takahashi-Fujii A."/>
            <person name="Hara H."/>
            <person name="Tanase T.-O."/>
            <person name="Nomura Y."/>
            <person name="Togiya S."/>
            <person name="Komai F."/>
            <person name="Hara R."/>
            <person name="Takeuchi K."/>
            <person name="Arita M."/>
            <person name="Imose N."/>
            <person name="Musashino K."/>
            <person name="Yuuki H."/>
            <person name="Oshima A."/>
            <person name="Sasaki N."/>
            <person name="Aotsuka S."/>
            <person name="Yoshikawa Y."/>
            <person name="Matsunawa H."/>
            <person name="Ichihara T."/>
            <person name="Shiohata N."/>
            <person name="Sano S."/>
            <person name="Moriya S."/>
            <person name="Momiyama H."/>
            <person name="Satoh N."/>
            <person name="Takami S."/>
            <person name="Terashima Y."/>
            <person name="Suzuki O."/>
            <person name="Nakagawa S."/>
            <person name="Senoh A."/>
            <person name="Mizoguchi H."/>
            <person name="Goto Y."/>
            <person name="Shimizu F."/>
            <person name="Wakebe H."/>
            <person name="Hishigaki H."/>
            <person name="Watanabe T."/>
            <person name="Sugiyama A."/>
            <person name="Takemoto M."/>
            <person name="Kawakami B."/>
            <person name="Yamazaki M."/>
            <person name="Watanabe K."/>
            <person name="Kumagai A."/>
            <person name="Itakura S."/>
            <person name="Fukuzumi Y."/>
            <person name="Fujimori Y."/>
            <person name="Komiyama M."/>
            <person name="Tashiro H."/>
            <person name="Tanigami A."/>
            <person name="Fujiwara T."/>
            <person name="Ono T."/>
            <person name="Yamada K."/>
            <person name="Fujii Y."/>
            <person name="Ozaki K."/>
            <person name="Hirao M."/>
            <person name="Ohmori Y."/>
            <person name="Kawabata A."/>
            <person name="Hikiji T."/>
            <person name="Kobatake N."/>
            <person name="Inagaki H."/>
            <person name="Ikema Y."/>
            <person name="Okamoto S."/>
            <person name="Okitani R."/>
            <person name="Kawakami T."/>
            <person name="Noguchi S."/>
            <person name="Itoh T."/>
            <person name="Shigeta K."/>
            <person name="Senba T."/>
            <person name="Matsumura K."/>
            <person name="Nakajima Y."/>
            <person name="Mizuno T."/>
            <person name="Morinaga M."/>
            <person name="Sasaki M."/>
            <person name="Togashi T."/>
            <person name="Oyama M."/>
            <person name="Hata H."/>
            <person name="Watanabe M."/>
            <person name="Komatsu T."/>
            <person name="Mizushima-Sugano J."/>
            <person name="Satoh T."/>
            <person name="Shirai Y."/>
            <person name="Takahashi Y."/>
            <person name="Nakagawa K."/>
            <person name="Okumura K."/>
            <person name="Nagase T."/>
            <person name="Nomura N."/>
            <person name="Kikuchi H."/>
            <person name="Masuho Y."/>
            <person name="Yamashita R."/>
            <person name="Nakai K."/>
            <person name="Yada T."/>
            <person name="Nakamura Y."/>
            <person name="Ohara O."/>
            <person name="Isogai T."/>
            <person name="Sugano S."/>
        </authorList>
    </citation>
    <scope>NUCLEOTIDE SEQUENCE [LARGE SCALE MRNA] OF 188-717 (ISOFORM 1)</scope>
    <scope>VARIANT ILE-418</scope>
    <source>
        <tissue>Adrenal gland</tissue>
    </source>
</reference>
<name>ZN470_HUMAN</name>